<keyword id="KW-0963">Cytoplasm</keyword>
<keyword id="KW-0671">Queuosine biosynthesis</keyword>
<keyword id="KW-1185">Reference proteome</keyword>
<keyword id="KW-0949">S-adenosyl-L-methionine</keyword>
<keyword id="KW-0808">Transferase</keyword>
<proteinExistence type="inferred from homology"/>
<gene>
    <name evidence="1" type="primary">queA</name>
    <name type="ordered locus">Swoo_1755</name>
</gene>
<organism>
    <name type="scientific">Shewanella woodyi (strain ATCC 51908 / MS32)</name>
    <dbReference type="NCBI Taxonomy" id="392500"/>
    <lineage>
        <taxon>Bacteria</taxon>
        <taxon>Pseudomonadati</taxon>
        <taxon>Pseudomonadota</taxon>
        <taxon>Gammaproteobacteria</taxon>
        <taxon>Alteromonadales</taxon>
        <taxon>Shewanellaceae</taxon>
        <taxon>Shewanella</taxon>
    </lineage>
</organism>
<evidence type="ECO:0000255" key="1">
    <source>
        <dbReference type="HAMAP-Rule" id="MF_00113"/>
    </source>
</evidence>
<accession>B1KNG3</accession>
<protein>
    <recommendedName>
        <fullName evidence="1">S-adenosylmethionine:tRNA ribosyltransferase-isomerase</fullName>
        <ecNumber evidence="1">2.4.99.17</ecNumber>
    </recommendedName>
    <alternativeName>
        <fullName evidence="1">Queuosine biosynthesis protein QueA</fullName>
    </alternativeName>
</protein>
<comment type="function">
    <text evidence="1">Transfers and isomerizes the ribose moiety from AdoMet to the 7-aminomethyl group of 7-deazaguanine (preQ1-tRNA) to give epoxyqueuosine (oQ-tRNA).</text>
</comment>
<comment type="catalytic activity">
    <reaction evidence="1">
        <text>7-aminomethyl-7-carbaguanosine(34) in tRNA + S-adenosyl-L-methionine = epoxyqueuosine(34) in tRNA + adenine + L-methionine + 2 H(+)</text>
        <dbReference type="Rhea" id="RHEA:32155"/>
        <dbReference type="Rhea" id="RHEA-COMP:10342"/>
        <dbReference type="Rhea" id="RHEA-COMP:18582"/>
        <dbReference type="ChEBI" id="CHEBI:15378"/>
        <dbReference type="ChEBI" id="CHEBI:16708"/>
        <dbReference type="ChEBI" id="CHEBI:57844"/>
        <dbReference type="ChEBI" id="CHEBI:59789"/>
        <dbReference type="ChEBI" id="CHEBI:82833"/>
        <dbReference type="ChEBI" id="CHEBI:194443"/>
        <dbReference type="EC" id="2.4.99.17"/>
    </reaction>
</comment>
<comment type="pathway">
    <text evidence="1">tRNA modification; tRNA-queuosine biosynthesis.</text>
</comment>
<comment type="subunit">
    <text evidence="1">Monomer.</text>
</comment>
<comment type="subcellular location">
    <subcellularLocation>
        <location evidence="1">Cytoplasm</location>
    </subcellularLocation>
</comment>
<comment type="similarity">
    <text evidence="1">Belongs to the QueA family.</text>
</comment>
<feature type="chain" id="PRO_1000094817" description="S-adenosylmethionine:tRNA ribosyltransferase-isomerase">
    <location>
        <begin position="1"/>
        <end position="345"/>
    </location>
</feature>
<name>QUEA_SHEWM</name>
<dbReference type="EC" id="2.4.99.17" evidence="1"/>
<dbReference type="EMBL" id="CP000961">
    <property type="protein sequence ID" value="ACA86040.1"/>
    <property type="molecule type" value="Genomic_DNA"/>
</dbReference>
<dbReference type="RefSeq" id="WP_012324386.1">
    <property type="nucleotide sequence ID" value="NC_010506.1"/>
</dbReference>
<dbReference type="SMR" id="B1KNG3"/>
<dbReference type="STRING" id="392500.Swoo_1755"/>
<dbReference type="KEGG" id="swd:Swoo_1755"/>
<dbReference type="eggNOG" id="COG0809">
    <property type="taxonomic scope" value="Bacteria"/>
</dbReference>
<dbReference type="HOGENOM" id="CLU_039110_1_0_6"/>
<dbReference type="UniPathway" id="UPA00392"/>
<dbReference type="Proteomes" id="UP000002168">
    <property type="component" value="Chromosome"/>
</dbReference>
<dbReference type="GO" id="GO:0005737">
    <property type="term" value="C:cytoplasm"/>
    <property type="evidence" value="ECO:0007669"/>
    <property type="project" value="UniProtKB-SubCell"/>
</dbReference>
<dbReference type="GO" id="GO:0051075">
    <property type="term" value="F:S-adenosylmethionine:tRNA ribosyltransferase-isomerase activity"/>
    <property type="evidence" value="ECO:0007669"/>
    <property type="project" value="UniProtKB-EC"/>
</dbReference>
<dbReference type="GO" id="GO:0008616">
    <property type="term" value="P:queuosine biosynthetic process"/>
    <property type="evidence" value="ECO:0007669"/>
    <property type="project" value="UniProtKB-UniRule"/>
</dbReference>
<dbReference type="GO" id="GO:0002099">
    <property type="term" value="P:tRNA wobble guanine modification"/>
    <property type="evidence" value="ECO:0007669"/>
    <property type="project" value="TreeGrafter"/>
</dbReference>
<dbReference type="FunFam" id="2.40.10.240:FF:000001">
    <property type="entry name" value="S-adenosylmethionine:tRNA ribosyltransferase-isomerase"/>
    <property type="match status" value="1"/>
</dbReference>
<dbReference type="FunFam" id="3.40.1780.10:FF:000001">
    <property type="entry name" value="S-adenosylmethionine:tRNA ribosyltransferase-isomerase"/>
    <property type="match status" value="1"/>
</dbReference>
<dbReference type="Gene3D" id="2.40.10.240">
    <property type="entry name" value="QueA-like"/>
    <property type="match status" value="1"/>
</dbReference>
<dbReference type="Gene3D" id="3.40.1780.10">
    <property type="entry name" value="QueA-like"/>
    <property type="match status" value="1"/>
</dbReference>
<dbReference type="HAMAP" id="MF_00113">
    <property type="entry name" value="QueA"/>
    <property type="match status" value="1"/>
</dbReference>
<dbReference type="InterPro" id="IPR003699">
    <property type="entry name" value="QueA"/>
</dbReference>
<dbReference type="InterPro" id="IPR042118">
    <property type="entry name" value="QueA_dom1"/>
</dbReference>
<dbReference type="InterPro" id="IPR042119">
    <property type="entry name" value="QueA_dom2"/>
</dbReference>
<dbReference type="InterPro" id="IPR036100">
    <property type="entry name" value="QueA_sf"/>
</dbReference>
<dbReference type="NCBIfam" id="NF001140">
    <property type="entry name" value="PRK00147.1"/>
    <property type="match status" value="1"/>
</dbReference>
<dbReference type="NCBIfam" id="TIGR00113">
    <property type="entry name" value="queA"/>
    <property type="match status" value="1"/>
</dbReference>
<dbReference type="PANTHER" id="PTHR30307">
    <property type="entry name" value="S-ADENOSYLMETHIONINE:TRNA RIBOSYLTRANSFERASE-ISOMERASE"/>
    <property type="match status" value="1"/>
</dbReference>
<dbReference type="PANTHER" id="PTHR30307:SF0">
    <property type="entry name" value="S-ADENOSYLMETHIONINE:TRNA RIBOSYLTRANSFERASE-ISOMERASE"/>
    <property type="match status" value="1"/>
</dbReference>
<dbReference type="Pfam" id="PF02547">
    <property type="entry name" value="Queuosine_synth"/>
    <property type="match status" value="1"/>
</dbReference>
<dbReference type="SUPFAM" id="SSF111337">
    <property type="entry name" value="QueA-like"/>
    <property type="match status" value="1"/>
</dbReference>
<reference key="1">
    <citation type="submission" date="2008-02" db="EMBL/GenBank/DDBJ databases">
        <title>Complete sequence of Shewanella woodyi ATCC 51908.</title>
        <authorList>
            <consortium name="US DOE Joint Genome Institute"/>
            <person name="Copeland A."/>
            <person name="Lucas S."/>
            <person name="Lapidus A."/>
            <person name="Glavina del Rio T."/>
            <person name="Dalin E."/>
            <person name="Tice H."/>
            <person name="Bruce D."/>
            <person name="Goodwin L."/>
            <person name="Pitluck S."/>
            <person name="Sims D."/>
            <person name="Brettin T."/>
            <person name="Detter J.C."/>
            <person name="Han C."/>
            <person name="Kuske C.R."/>
            <person name="Schmutz J."/>
            <person name="Larimer F."/>
            <person name="Land M."/>
            <person name="Hauser L."/>
            <person name="Kyrpides N."/>
            <person name="Lykidis A."/>
            <person name="Zhao J.-S."/>
            <person name="Richardson P."/>
        </authorList>
    </citation>
    <scope>NUCLEOTIDE SEQUENCE [LARGE SCALE GENOMIC DNA]</scope>
    <source>
        <strain>ATCC 51908 / MS32</strain>
    </source>
</reference>
<sequence length="345" mass="38605">MRVTDFSFELPDELIARYPMPERTSSRLLSLEGNSGKLGDNQFTDILDMVNPGDLMVFNNTRVIPARLFGQKETGGKLEILVERMLDDKRILAHVRSSKSPKVNTKVCLDGGYEMTMLARHDALFELELNDEKTILEVLEKVGHMPLPPYIDRPDEDADKERYQTVYNDAPGAVAAPTAGLHFDDALLNRLKEKGVDTAFVTLHVGAGTFQPVKVDDVLDHKMHSEWAEVSQEVVDKIAHTKAHGGRVIAVGTTSVRSLESAAKASEDELQPFCRDTDIFIYPGYEFKVVDAMVTNFHLPESTLIMLLSAFAGFDEVKNAYQHAIAQKYRFFSYGDAMFVTKKAN</sequence>